<sequence length="194" mass="21099">MLEQLMEALRCLPGVGPKSAQRMAFHLLQRDRKGGLQLADALSQAMTEIGHCTECRTFTEEEVCHICTNPKRQENGQICVVESPADIAAVEATGQYSGRYFVLMGHLSPLDGIGPSDIGLDVLDYRLRRGDISEVILATNPTVEGEATAHYIAELCKEHQVEASRIAHGVPVGGELELVDGTTLSHSLLGRHKI</sequence>
<organism>
    <name type="scientific">Vibrio campbellii (strain ATCC BAA-1116)</name>
    <dbReference type="NCBI Taxonomy" id="2902295"/>
    <lineage>
        <taxon>Bacteria</taxon>
        <taxon>Pseudomonadati</taxon>
        <taxon>Pseudomonadota</taxon>
        <taxon>Gammaproteobacteria</taxon>
        <taxon>Vibrionales</taxon>
        <taxon>Vibrionaceae</taxon>
        <taxon>Vibrio</taxon>
    </lineage>
</organism>
<gene>
    <name evidence="1" type="primary">recR</name>
    <name type="ordered locus">VIBHAR_03085</name>
</gene>
<feature type="chain" id="PRO_0000322970" description="Recombination protein RecR">
    <location>
        <begin position="1"/>
        <end position="194"/>
    </location>
</feature>
<feature type="domain" description="Toprim" evidence="1">
    <location>
        <begin position="76"/>
        <end position="171"/>
    </location>
</feature>
<feature type="zinc finger region" description="C4-type" evidence="1">
    <location>
        <begin position="52"/>
        <end position="67"/>
    </location>
</feature>
<accession>A7MUE4</accession>
<dbReference type="EMBL" id="CP000789">
    <property type="protein sequence ID" value="ABU72034.1"/>
    <property type="molecule type" value="Genomic_DNA"/>
</dbReference>
<dbReference type="SMR" id="A7MUE4"/>
<dbReference type="KEGG" id="vha:VIBHAR_03085"/>
<dbReference type="PATRIC" id="fig|338187.36.peg.3014"/>
<dbReference type="Proteomes" id="UP000008152">
    <property type="component" value="Chromosome I"/>
</dbReference>
<dbReference type="GO" id="GO:0003677">
    <property type="term" value="F:DNA binding"/>
    <property type="evidence" value="ECO:0007669"/>
    <property type="project" value="UniProtKB-UniRule"/>
</dbReference>
<dbReference type="GO" id="GO:0008270">
    <property type="term" value="F:zinc ion binding"/>
    <property type="evidence" value="ECO:0007669"/>
    <property type="project" value="UniProtKB-KW"/>
</dbReference>
<dbReference type="GO" id="GO:0006310">
    <property type="term" value="P:DNA recombination"/>
    <property type="evidence" value="ECO:0007669"/>
    <property type="project" value="UniProtKB-UniRule"/>
</dbReference>
<dbReference type="GO" id="GO:0006281">
    <property type="term" value="P:DNA repair"/>
    <property type="evidence" value="ECO:0007669"/>
    <property type="project" value="UniProtKB-UniRule"/>
</dbReference>
<dbReference type="CDD" id="cd01025">
    <property type="entry name" value="TOPRIM_recR"/>
    <property type="match status" value="1"/>
</dbReference>
<dbReference type="FunFam" id="1.10.8.420:FF:000001">
    <property type="entry name" value="Recombination protein RecR"/>
    <property type="match status" value="1"/>
</dbReference>
<dbReference type="FunFam" id="3.40.1360.10:FF:000001">
    <property type="entry name" value="Recombination protein RecR"/>
    <property type="match status" value="1"/>
</dbReference>
<dbReference type="Gene3D" id="3.40.1360.10">
    <property type="match status" value="1"/>
</dbReference>
<dbReference type="Gene3D" id="6.10.250.240">
    <property type="match status" value="1"/>
</dbReference>
<dbReference type="Gene3D" id="1.10.8.420">
    <property type="entry name" value="RecR Domain 1"/>
    <property type="match status" value="1"/>
</dbReference>
<dbReference type="HAMAP" id="MF_00017">
    <property type="entry name" value="RecR"/>
    <property type="match status" value="1"/>
</dbReference>
<dbReference type="InterPro" id="IPR000093">
    <property type="entry name" value="DNA_Rcmb_RecR"/>
</dbReference>
<dbReference type="InterPro" id="IPR023627">
    <property type="entry name" value="Rcmb_RecR"/>
</dbReference>
<dbReference type="InterPro" id="IPR015967">
    <property type="entry name" value="Rcmb_RecR_Znf"/>
</dbReference>
<dbReference type="InterPro" id="IPR006171">
    <property type="entry name" value="TOPRIM_dom"/>
</dbReference>
<dbReference type="InterPro" id="IPR034137">
    <property type="entry name" value="TOPRIM_RecR"/>
</dbReference>
<dbReference type="NCBIfam" id="TIGR00615">
    <property type="entry name" value="recR"/>
    <property type="match status" value="1"/>
</dbReference>
<dbReference type="PANTHER" id="PTHR30446">
    <property type="entry name" value="RECOMBINATION PROTEIN RECR"/>
    <property type="match status" value="1"/>
</dbReference>
<dbReference type="PANTHER" id="PTHR30446:SF0">
    <property type="entry name" value="RECOMBINATION PROTEIN RECR"/>
    <property type="match status" value="1"/>
</dbReference>
<dbReference type="Pfam" id="PF21175">
    <property type="entry name" value="RecR_C"/>
    <property type="match status" value="1"/>
</dbReference>
<dbReference type="Pfam" id="PF21176">
    <property type="entry name" value="RecR_HhH"/>
    <property type="match status" value="1"/>
</dbReference>
<dbReference type="Pfam" id="PF02132">
    <property type="entry name" value="RecR_ZnF"/>
    <property type="match status" value="1"/>
</dbReference>
<dbReference type="Pfam" id="PF13662">
    <property type="entry name" value="Toprim_4"/>
    <property type="match status" value="1"/>
</dbReference>
<dbReference type="SMART" id="SM00493">
    <property type="entry name" value="TOPRIM"/>
    <property type="match status" value="1"/>
</dbReference>
<dbReference type="SUPFAM" id="SSF111304">
    <property type="entry name" value="Recombination protein RecR"/>
    <property type="match status" value="1"/>
</dbReference>
<dbReference type="PROSITE" id="PS01300">
    <property type="entry name" value="RECR"/>
    <property type="match status" value="1"/>
</dbReference>
<dbReference type="PROSITE" id="PS50880">
    <property type="entry name" value="TOPRIM"/>
    <property type="match status" value="1"/>
</dbReference>
<evidence type="ECO:0000255" key="1">
    <source>
        <dbReference type="HAMAP-Rule" id="MF_00017"/>
    </source>
</evidence>
<keyword id="KW-0227">DNA damage</keyword>
<keyword id="KW-0233">DNA recombination</keyword>
<keyword id="KW-0234">DNA repair</keyword>
<keyword id="KW-0479">Metal-binding</keyword>
<keyword id="KW-0862">Zinc</keyword>
<keyword id="KW-0863">Zinc-finger</keyword>
<comment type="function">
    <text evidence="1">May play a role in DNA repair. It seems to be involved in an RecBC-independent recombinational process of DNA repair. It may act with RecF and RecO.</text>
</comment>
<comment type="similarity">
    <text evidence="1">Belongs to the RecR family.</text>
</comment>
<name>RECR_VIBC1</name>
<reference key="1">
    <citation type="submission" date="2007-08" db="EMBL/GenBank/DDBJ databases">
        <authorList>
            <consortium name="The Vibrio harveyi Genome Sequencing Project"/>
            <person name="Bassler B."/>
            <person name="Clifton S.W."/>
            <person name="Fulton L."/>
            <person name="Delehaunty K."/>
            <person name="Fronick C."/>
            <person name="Harrison M."/>
            <person name="Markivic C."/>
            <person name="Fulton R."/>
            <person name="Tin-Wollam A.-M."/>
            <person name="Shah N."/>
            <person name="Pepin K."/>
            <person name="Nash W."/>
            <person name="Thiruvilangam P."/>
            <person name="Bhonagiri V."/>
            <person name="Waters C."/>
            <person name="Tu K.C."/>
            <person name="Irgon J."/>
            <person name="Wilson R.K."/>
        </authorList>
    </citation>
    <scope>NUCLEOTIDE SEQUENCE [LARGE SCALE GENOMIC DNA]</scope>
    <source>
        <strain>ATCC BAA-1116 / BB120</strain>
    </source>
</reference>
<protein>
    <recommendedName>
        <fullName evidence="1">Recombination protein RecR</fullName>
    </recommendedName>
</protein>
<proteinExistence type="inferred from homology"/>